<dbReference type="EC" id="4.2.1.11" evidence="1"/>
<dbReference type="EMBL" id="BX571857">
    <property type="protein sequence ID" value="CAG42517.1"/>
    <property type="molecule type" value="Genomic_DNA"/>
</dbReference>
<dbReference type="RefSeq" id="WP_001121760.1">
    <property type="nucleotide sequence ID" value="NC_002953.3"/>
</dbReference>
<dbReference type="SMR" id="Q6GB54"/>
<dbReference type="MoonProt" id="Q6GB54"/>
<dbReference type="KEGG" id="sas:SAS0742"/>
<dbReference type="HOGENOM" id="CLU_031223_2_1_9"/>
<dbReference type="UniPathway" id="UPA00109">
    <property type="reaction ID" value="UER00187"/>
</dbReference>
<dbReference type="GO" id="GO:0009986">
    <property type="term" value="C:cell surface"/>
    <property type="evidence" value="ECO:0007669"/>
    <property type="project" value="UniProtKB-SubCell"/>
</dbReference>
<dbReference type="GO" id="GO:0005576">
    <property type="term" value="C:extracellular region"/>
    <property type="evidence" value="ECO:0007669"/>
    <property type="project" value="UniProtKB-SubCell"/>
</dbReference>
<dbReference type="GO" id="GO:0000015">
    <property type="term" value="C:phosphopyruvate hydratase complex"/>
    <property type="evidence" value="ECO:0007669"/>
    <property type="project" value="InterPro"/>
</dbReference>
<dbReference type="GO" id="GO:0000287">
    <property type="term" value="F:magnesium ion binding"/>
    <property type="evidence" value="ECO:0007669"/>
    <property type="project" value="UniProtKB-UniRule"/>
</dbReference>
<dbReference type="GO" id="GO:0004634">
    <property type="term" value="F:phosphopyruvate hydratase activity"/>
    <property type="evidence" value="ECO:0007669"/>
    <property type="project" value="UniProtKB-UniRule"/>
</dbReference>
<dbReference type="GO" id="GO:0006096">
    <property type="term" value="P:glycolytic process"/>
    <property type="evidence" value="ECO:0007669"/>
    <property type="project" value="UniProtKB-UniRule"/>
</dbReference>
<dbReference type="CDD" id="cd03313">
    <property type="entry name" value="enolase"/>
    <property type="match status" value="1"/>
</dbReference>
<dbReference type="FunFam" id="3.20.20.120:FF:000001">
    <property type="entry name" value="Enolase"/>
    <property type="match status" value="1"/>
</dbReference>
<dbReference type="FunFam" id="3.30.390.10:FF:000001">
    <property type="entry name" value="Enolase"/>
    <property type="match status" value="1"/>
</dbReference>
<dbReference type="Gene3D" id="3.20.20.120">
    <property type="entry name" value="Enolase-like C-terminal domain"/>
    <property type="match status" value="1"/>
</dbReference>
<dbReference type="Gene3D" id="3.30.390.10">
    <property type="entry name" value="Enolase-like, N-terminal domain"/>
    <property type="match status" value="1"/>
</dbReference>
<dbReference type="HAMAP" id="MF_00318">
    <property type="entry name" value="Enolase"/>
    <property type="match status" value="1"/>
</dbReference>
<dbReference type="InterPro" id="IPR000941">
    <property type="entry name" value="Enolase"/>
</dbReference>
<dbReference type="InterPro" id="IPR036849">
    <property type="entry name" value="Enolase-like_C_sf"/>
</dbReference>
<dbReference type="InterPro" id="IPR029017">
    <property type="entry name" value="Enolase-like_N"/>
</dbReference>
<dbReference type="InterPro" id="IPR020810">
    <property type="entry name" value="Enolase_C"/>
</dbReference>
<dbReference type="InterPro" id="IPR020809">
    <property type="entry name" value="Enolase_CS"/>
</dbReference>
<dbReference type="InterPro" id="IPR020811">
    <property type="entry name" value="Enolase_N"/>
</dbReference>
<dbReference type="NCBIfam" id="TIGR01060">
    <property type="entry name" value="eno"/>
    <property type="match status" value="1"/>
</dbReference>
<dbReference type="PANTHER" id="PTHR11902">
    <property type="entry name" value="ENOLASE"/>
    <property type="match status" value="1"/>
</dbReference>
<dbReference type="PANTHER" id="PTHR11902:SF1">
    <property type="entry name" value="ENOLASE"/>
    <property type="match status" value="1"/>
</dbReference>
<dbReference type="Pfam" id="PF00113">
    <property type="entry name" value="Enolase_C"/>
    <property type="match status" value="1"/>
</dbReference>
<dbReference type="Pfam" id="PF03952">
    <property type="entry name" value="Enolase_N"/>
    <property type="match status" value="1"/>
</dbReference>
<dbReference type="PIRSF" id="PIRSF001400">
    <property type="entry name" value="Enolase"/>
    <property type="match status" value="1"/>
</dbReference>
<dbReference type="PRINTS" id="PR00148">
    <property type="entry name" value="ENOLASE"/>
</dbReference>
<dbReference type="SFLD" id="SFLDF00002">
    <property type="entry name" value="enolase"/>
    <property type="match status" value="1"/>
</dbReference>
<dbReference type="SFLD" id="SFLDG00178">
    <property type="entry name" value="enolase"/>
    <property type="match status" value="1"/>
</dbReference>
<dbReference type="SMART" id="SM01192">
    <property type="entry name" value="Enolase_C"/>
    <property type="match status" value="1"/>
</dbReference>
<dbReference type="SMART" id="SM01193">
    <property type="entry name" value="Enolase_N"/>
    <property type="match status" value="1"/>
</dbReference>
<dbReference type="SUPFAM" id="SSF51604">
    <property type="entry name" value="Enolase C-terminal domain-like"/>
    <property type="match status" value="1"/>
</dbReference>
<dbReference type="SUPFAM" id="SSF54826">
    <property type="entry name" value="Enolase N-terminal domain-like"/>
    <property type="match status" value="1"/>
</dbReference>
<dbReference type="PROSITE" id="PS00164">
    <property type="entry name" value="ENOLASE"/>
    <property type="match status" value="1"/>
</dbReference>
<protein>
    <recommendedName>
        <fullName evidence="1">Enolase</fullName>
        <ecNumber evidence="1">4.2.1.11</ecNumber>
    </recommendedName>
    <alternativeName>
        <fullName evidence="1">2-phospho-D-glycerate hydro-lyase</fullName>
    </alternativeName>
    <alternativeName>
        <fullName evidence="1">2-phosphoglycerate dehydratase</fullName>
    </alternativeName>
</protein>
<evidence type="ECO:0000255" key="1">
    <source>
        <dbReference type="HAMAP-Rule" id="MF_00318"/>
    </source>
</evidence>
<sequence length="434" mass="47117">MPIITDVYAREVLDSRGNPTVEVEVLTESGAFGRALVPSGASTGEHEAVELRDGDKSRYLGKGVTKAVENVNEIIAPEIIEGEFSVLDQVSIDKMMIALDGTPNKGKLGANAILGVSIAVARAAADLLGQPLYKYLGGFNGKQLPVPMMNIVNGGSHSDAPIAFQEFMILPVGATTFKESLRWGTEIFHNLKSILSKRGLETAVGDEGGFAPKFEGTEDAVETIIQAIEAAGYKPGEEVFLGFDCASSEFYENGVYDYSKFEGEHGAKRTAAEQVDYLEQLVDKYPIITIEDGMDENDWDGWKQLTERIGDRVQLVGDDLFVTNTEILAKGIENGIGNSILIKVNQIGTLTETFDAIEMAQKAGYTAVVSHRSGETEDTTIADIAVATNAGQIKTGSLSRTDRIAKYNQLLRIEDELFETAKYDGIKSFYNLDK</sequence>
<reference key="1">
    <citation type="journal article" date="2004" name="Proc. Natl. Acad. Sci. U.S.A.">
        <title>Complete genomes of two clinical Staphylococcus aureus strains: evidence for the rapid evolution of virulence and drug resistance.</title>
        <authorList>
            <person name="Holden M.T.G."/>
            <person name="Feil E.J."/>
            <person name="Lindsay J.A."/>
            <person name="Peacock S.J."/>
            <person name="Day N.P.J."/>
            <person name="Enright M.C."/>
            <person name="Foster T.J."/>
            <person name="Moore C.E."/>
            <person name="Hurst L."/>
            <person name="Atkin R."/>
            <person name="Barron A."/>
            <person name="Bason N."/>
            <person name="Bentley S.D."/>
            <person name="Chillingworth C."/>
            <person name="Chillingworth T."/>
            <person name="Churcher C."/>
            <person name="Clark L."/>
            <person name="Corton C."/>
            <person name="Cronin A."/>
            <person name="Doggett J."/>
            <person name="Dowd L."/>
            <person name="Feltwell T."/>
            <person name="Hance Z."/>
            <person name="Harris B."/>
            <person name="Hauser H."/>
            <person name="Holroyd S."/>
            <person name="Jagels K."/>
            <person name="James K.D."/>
            <person name="Lennard N."/>
            <person name="Line A."/>
            <person name="Mayes R."/>
            <person name="Moule S."/>
            <person name="Mungall K."/>
            <person name="Ormond D."/>
            <person name="Quail M.A."/>
            <person name="Rabbinowitsch E."/>
            <person name="Rutherford K.M."/>
            <person name="Sanders M."/>
            <person name="Sharp S."/>
            <person name="Simmonds M."/>
            <person name="Stevens K."/>
            <person name="Whitehead S."/>
            <person name="Barrell B.G."/>
            <person name="Spratt B.G."/>
            <person name="Parkhill J."/>
        </authorList>
    </citation>
    <scope>NUCLEOTIDE SEQUENCE [LARGE SCALE GENOMIC DNA]</scope>
    <source>
        <strain>MSSA476</strain>
    </source>
</reference>
<accession>Q6GB54</accession>
<comment type="function">
    <text evidence="1">Catalyzes the reversible conversion of 2-phosphoglycerate (2-PG) into phosphoenolpyruvate (PEP). It is essential for the degradation of carbohydrates via glycolysis.</text>
</comment>
<comment type="catalytic activity">
    <reaction evidence="1">
        <text>(2R)-2-phosphoglycerate = phosphoenolpyruvate + H2O</text>
        <dbReference type="Rhea" id="RHEA:10164"/>
        <dbReference type="ChEBI" id="CHEBI:15377"/>
        <dbReference type="ChEBI" id="CHEBI:58289"/>
        <dbReference type="ChEBI" id="CHEBI:58702"/>
        <dbReference type="EC" id="4.2.1.11"/>
    </reaction>
</comment>
<comment type="cofactor">
    <cofactor evidence="1">
        <name>Mg(2+)</name>
        <dbReference type="ChEBI" id="CHEBI:18420"/>
    </cofactor>
    <text evidence="1">Binds a second Mg(2+) ion via substrate during catalysis.</text>
</comment>
<comment type="pathway">
    <text evidence="1">Carbohydrate degradation; glycolysis; pyruvate from D-glyceraldehyde 3-phosphate: step 4/5.</text>
</comment>
<comment type="subcellular location">
    <subcellularLocation>
        <location evidence="1">Cytoplasm</location>
    </subcellularLocation>
    <subcellularLocation>
        <location evidence="1">Secreted</location>
    </subcellularLocation>
    <subcellularLocation>
        <location evidence="1">Cell surface</location>
    </subcellularLocation>
    <text evidence="1">Fractions of enolase are present in both the cytoplasm and on the cell surface.</text>
</comment>
<comment type="similarity">
    <text evidence="1">Belongs to the enolase family.</text>
</comment>
<proteinExistence type="inferred from homology"/>
<feature type="chain" id="PRO_0000133968" description="Enolase">
    <location>
        <begin position="1"/>
        <end position="434"/>
    </location>
</feature>
<feature type="active site" description="Proton donor" evidence="1">
    <location>
        <position position="207"/>
    </location>
</feature>
<feature type="active site" description="Proton acceptor" evidence="1">
    <location>
        <position position="343"/>
    </location>
</feature>
<feature type="binding site" evidence="1">
    <location>
        <position position="165"/>
    </location>
    <ligand>
        <name>(2R)-2-phosphoglycerate</name>
        <dbReference type="ChEBI" id="CHEBI:58289"/>
    </ligand>
</feature>
<feature type="binding site" evidence="1">
    <location>
        <position position="244"/>
    </location>
    <ligand>
        <name>Mg(2+)</name>
        <dbReference type="ChEBI" id="CHEBI:18420"/>
    </ligand>
</feature>
<feature type="binding site" evidence="1">
    <location>
        <position position="291"/>
    </location>
    <ligand>
        <name>Mg(2+)</name>
        <dbReference type="ChEBI" id="CHEBI:18420"/>
    </ligand>
</feature>
<feature type="binding site" evidence="1">
    <location>
        <position position="318"/>
    </location>
    <ligand>
        <name>Mg(2+)</name>
        <dbReference type="ChEBI" id="CHEBI:18420"/>
    </ligand>
</feature>
<feature type="binding site" evidence="1">
    <location>
        <position position="343"/>
    </location>
    <ligand>
        <name>(2R)-2-phosphoglycerate</name>
        <dbReference type="ChEBI" id="CHEBI:58289"/>
    </ligand>
</feature>
<feature type="binding site" evidence="1">
    <location>
        <position position="372"/>
    </location>
    <ligand>
        <name>(2R)-2-phosphoglycerate</name>
        <dbReference type="ChEBI" id="CHEBI:58289"/>
    </ligand>
</feature>
<feature type="binding site" evidence="1">
    <location>
        <position position="373"/>
    </location>
    <ligand>
        <name>(2R)-2-phosphoglycerate</name>
        <dbReference type="ChEBI" id="CHEBI:58289"/>
    </ligand>
</feature>
<feature type="binding site" evidence="1">
    <location>
        <position position="394"/>
    </location>
    <ligand>
        <name>(2R)-2-phosphoglycerate</name>
        <dbReference type="ChEBI" id="CHEBI:58289"/>
    </ligand>
</feature>
<gene>
    <name evidence="1" type="primary">eno</name>
    <name type="ordered locus">SAS0742</name>
</gene>
<keyword id="KW-0963">Cytoplasm</keyword>
<keyword id="KW-0324">Glycolysis</keyword>
<keyword id="KW-0456">Lyase</keyword>
<keyword id="KW-0460">Magnesium</keyword>
<keyword id="KW-0479">Metal-binding</keyword>
<keyword id="KW-0964">Secreted</keyword>
<keyword id="KW-0843">Virulence</keyword>
<name>ENO_STAAS</name>
<organism>
    <name type="scientific">Staphylococcus aureus (strain MSSA476)</name>
    <dbReference type="NCBI Taxonomy" id="282459"/>
    <lineage>
        <taxon>Bacteria</taxon>
        <taxon>Bacillati</taxon>
        <taxon>Bacillota</taxon>
        <taxon>Bacilli</taxon>
        <taxon>Bacillales</taxon>
        <taxon>Staphylococcaceae</taxon>
        <taxon>Staphylococcus</taxon>
    </lineage>
</organism>